<organism>
    <name type="scientific">Clostridium botulinum (strain Loch Maree / Type A3)</name>
    <dbReference type="NCBI Taxonomy" id="498214"/>
    <lineage>
        <taxon>Bacteria</taxon>
        <taxon>Bacillati</taxon>
        <taxon>Bacillota</taxon>
        <taxon>Clostridia</taxon>
        <taxon>Eubacteriales</taxon>
        <taxon>Clostridiaceae</taxon>
        <taxon>Clostridium</taxon>
    </lineage>
</organism>
<dbReference type="EMBL" id="CP000962">
    <property type="protein sequence ID" value="ACA55479.1"/>
    <property type="molecule type" value="Genomic_DNA"/>
</dbReference>
<dbReference type="RefSeq" id="WP_003362578.1">
    <property type="nucleotide sequence ID" value="NC_010520.1"/>
</dbReference>
<dbReference type="SMR" id="B1KWM5"/>
<dbReference type="GeneID" id="5186690"/>
<dbReference type="KEGG" id="cbl:CLK_1812"/>
<dbReference type="HOGENOM" id="CLU_040318_1_2_9"/>
<dbReference type="GO" id="GO:0022627">
    <property type="term" value="C:cytosolic small ribosomal subunit"/>
    <property type="evidence" value="ECO:0007669"/>
    <property type="project" value="TreeGrafter"/>
</dbReference>
<dbReference type="GO" id="GO:0003735">
    <property type="term" value="F:structural constituent of ribosome"/>
    <property type="evidence" value="ECO:0007669"/>
    <property type="project" value="InterPro"/>
</dbReference>
<dbReference type="GO" id="GO:0006412">
    <property type="term" value="P:translation"/>
    <property type="evidence" value="ECO:0007669"/>
    <property type="project" value="UniProtKB-UniRule"/>
</dbReference>
<dbReference type="CDD" id="cd01425">
    <property type="entry name" value="RPS2"/>
    <property type="match status" value="1"/>
</dbReference>
<dbReference type="FunFam" id="1.10.287.610:FF:000001">
    <property type="entry name" value="30S ribosomal protein S2"/>
    <property type="match status" value="1"/>
</dbReference>
<dbReference type="Gene3D" id="3.40.50.10490">
    <property type="entry name" value="Glucose-6-phosphate isomerase like protein, domain 1"/>
    <property type="match status" value="1"/>
</dbReference>
<dbReference type="Gene3D" id="1.10.287.610">
    <property type="entry name" value="Helix hairpin bin"/>
    <property type="match status" value="1"/>
</dbReference>
<dbReference type="HAMAP" id="MF_00291_B">
    <property type="entry name" value="Ribosomal_uS2_B"/>
    <property type="match status" value="1"/>
</dbReference>
<dbReference type="InterPro" id="IPR001865">
    <property type="entry name" value="Ribosomal_uS2"/>
</dbReference>
<dbReference type="InterPro" id="IPR005706">
    <property type="entry name" value="Ribosomal_uS2_bac/mit/plastid"/>
</dbReference>
<dbReference type="InterPro" id="IPR018130">
    <property type="entry name" value="Ribosomal_uS2_CS"/>
</dbReference>
<dbReference type="InterPro" id="IPR023591">
    <property type="entry name" value="Ribosomal_uS2_flav_dom_sf"/>
</dbReference>
<dbReference type="NCBIfam" id="TIGR01011">
    <property type="entry name" value="rpsB_bact"/>
    <property type="match status" value="1"/>
</dbReference>
<dbReference type="PANTHER" id="PTHR12534">
    <property type="entry name" value="30S RIBOSOMAL PROTEIN S2 PROKARYOTIC AND ORGANELLAR"/>
    <property type="match status" value="1"/>
</dbReference>
<dbReference type="PANTHER" id="PTHR12534:SF0">
    <property type="entry name" value="SMALL RIBOSOMAL SUBUNIT PROTEIN US2M"/>
    <property type="match status" value="1"/>
</dbReference>
<dbReference type="Pfam" id="PF00318">
    <property type="entry name" value="Ribosomal_S2"/>
    <property type="match status" value="1"/>
</dbReference>
<dbReference type="PRINTS" id="PR00395">
    <property type="entry name" value="RIBOSOMALS2"/>
</dbReference>
<dbReference type="SUPFAM" id="SSF52313">
    <property type="entry name" value="Ribosomal protein S2"/>
    <property type="match status" value="1"/>
</dbReference>
<dbReference type="PROSITE" id="PS00962">
    <property type="entry name" value="RIBOSOMAL_S2_1"/>
    <property type="match status" value="1"/>
</dbReference>
<comment type="similarity">
    <text evidence="1">Belongs to the universal ribosomal protein uS2 family.</text>
</comment>
<name>RS2_CLOBM</name>
<keyword id="KW-0687">Ribonucleoprotein</keyword>
<keyword id="KW-0689">Ribosomal protein</keyword>
<evidence type="ECO:0000255" key="1">
    <source>
        <dbReference type="HAMAP-Rule" id="MF_00291"/>
    </source>
</evidence>
<evidence type="ECO:0000305" key="2"/>
<feature type="chain" id="PRO_1000115008" description="Small ribosomal subunit protein uS2">
    <location>
        <begin position="1"/>
        <end position="233"/>
    </location>
</feature>
<protein>
    <recommendedName>
        <fullName evidence="1">Small ribosomal subunit protein uS2</fullName>
    </recommendedName>
    <alternativeName>
        <fullName evidence="2">30S ribosomal protein S2</fullName>
    </alternativeName>
</protein>
<sequence>MSVISMKQLLEAGVHFGHQTRRWNPKMAPYIFTERNGIYIIDLQKTVKKVEEAYNFLRSVAEEGKDVLFVGTKKQAQEAIEEEAKRSEMHFVNNRWLGGMLTNFTTITARINKLEELDKMEEDGTFEVLPKKEVIKLKNEREKLEKNLGGIRKLDANNVGAMFIVDPRKEKNAILEAKRLGIPVVAIVDTNCDPDEVDFVIPGNDDAIRAVRLIAAKMADAVLEGRQGEQLAE</sequence>
<proteinExistence type="inferred from homology"/>
<accession>B1KWM5</accession>
<reference key="1">
    <citation type="journal article" date="2007" name="PLoS ONE">
        <title>Analysis of the neurotoxin complex genes in Clostridium botulinum A1-A4 and B1 strains: BoNT/A3, /Ba4 and /B1 clusters are located within plasmids.</title>
        <authorList>
            <person name="Smith T.J."/>
            <person name="Hill K.K."/>
            <person name="Foley B.T."/>
            <person name="Detter J.C."/>
            <person name="Munk A.C."/>
            <person name="Bruce D.C."/>
            <person name="Doggett N.A."/>
            <person name="Smith L.A."/>
            <person name="Marks J.D."/>
            <person name="Xie G."/>
            <person name="Brettin T.S."/>
        </authorList>
    </citation>
    <scope>NUCLEOTIDE SEQUENCE [LARGE SCALE GENOMIC DNA]</scope>
    <source>
        <strain>Loch Maree / Type A3</strain>
    </source>
</reference>
<gene>
    <name evidence="1" type="primary">rpsB</name>
    <name type="ordered locus">CLK_1812</name>
</gene>